<gene>
    <name evidence="1" type="primary">rnhA</name>
    <name type="ordered locus">ETA_26350</name>
</gene>
<dbReference type="EC" id="3.1.26.4" evidence="1"/>
<dbReference type="EMBL" id="CU468135">
    <property type="protein sequence ID" value="CAO97681.1"/>
    <property type="molecule type" value="Genomic_DNA"/>
</dbReference>
<dbReference type="SMR" id="B2VHJ5"/>
<dbReference type="STRING" id="465817.ETA_26350"/>
<dbReference type="KEGG" id="eta:ETA_26350"/>
<dbReference type="eggNOG" id="COG0328">
    <property type="taxonomic scope" value="Bacteria"/>
</dbReference>
<dbReference type="HOGENOM" id="CLU_030894_6_0_6"/>
<dbReference type="OrthoDB" id="7845843at2"/>
<dbReference type="Proteomes" id="UP000001726">
    <property type="component" value="Chromosome"/>
</dbReference>
<dbReference type="GO" id="GO:0005737">
    <property type="term" value="C:cytoplasm"/>
    <property type="evidence" value="ECO:0007669"/>
    <property type="project" value="UniProtKB-SubCell"/>
</dbReference>
<dbReference type="GO" id="GO:0000287">
    <property type="term" value="F:magnesium ion binding"/>
    <property type="evidence" value="ECO:0007669"/>
    <property type="project" value="UniProtKB-UniRule"/>
</dbReference>
<dbReference type="GO" id="GO:0003676">
    <property type="term" value="F:nucleic acid binding"/>
    <property type="evidence" value="ECO:0007669"/>
    <property type="project" value="InterPro"/>
</dbReference>
<dbReference type="GO" id="GO:0004523">
    <property type="term" value="F:RNA-DNA hybrid ribonuclease activity"/>
    <property type="evidence" value="ECO:0007669"/>
    <property type="project" value="UniProtKB-UniRule"/>
</dbReference>
<dbReference type="GO" id="GO:0043137">
    <property type="term" value="P:DNA replication, removal of RNA primer"/>
    <property type="evidence" value="ECO:0007669"/>
    <property type="project" value="TreeGrafter"/>
</dbReference>
<dbReference type="CDD" id="cd09278">
    <property type="entry name" value="RNase_HI_prokaryote_like"/>
    <property type="match status" value="1"/>
</dbReference>
<dbReference type="FunFam" id="3.30.420.10:FF:000008">
    <property type="entry name" value="Ribonuclease H"/>
    <property type="match status" value="1"/>
</dbReference>
<dbReference type="Gene3D" id="3.30.420.10">
    <property type="entry name" value="Ribonuclease H-like superfamily/Ribonuclease H"/>
    <property type="match status" value="1"/>
</dbReference>
<dbReference type="HAMAP" id="MF_00042">
    <property type="entry name" value="RNase_H"/>
    <property type="match status" value="1"/>
</dbReference>
<dbReference type="InterPro" id="IPR050092">
    <property type="entry name" value="RNase_H"/>
</dbReference>
<dbReference type="InterPro" id="IPR012337">
    <property type="entry name" value="RNaseH-like_sf"/>
</dbReference>
<dbReference type="InterPro" id="IPR002156">
    <property type="entry name" value="RNaseH_domain"/>
</dbReference>
<dbReference type="InterPro" id="IPR036397">
    <property type="entry name" value="RNaseH_sf"/>
</dbReference>
<dbReference type="InterPro" id="IPR022892">
    <property type="entry name" value="RNaseHI"/>
</dbReference>
<dbReference type="NCBIfam" id="NF001236">
    <property type="entry name" value="PRK00203.1"/>
    <property type="match status" value="1"/>
</dbReference>
<dbReference type="PANTHER" id="PTHR10642">
    <property type="entry name" value="RIBONUCLEASE H1"/>
    <property type="match status" value="1"/>
</dbReference>
<dbReference type="PANTHER" id="PTHR10642:SF26">
    <property type="entry name" value="RIBONUCLEASE H1"/>
    <property type="match status" value="1"/>
</dbReference>
<dbReference type="Pfam" id="PF00075">
    <property type="entry name" value="RNase_H"/>
    <property type="match status" value="1"/>
</dbReference>
<dbReference type="SUPFAM" id="SSF53098">
    <property type="entry name" value="Ribonuclease H-like"/>
    <property type="match status" value="1"/>
</dbReference>
<dbReference type="PROSITE" id="PS50879">
    <property type="entry name" value="RNASE_H_1"/>
    <property type="match status" value="1"/>
</dbReference>
<comment type="function">
    <text evidence="1">Endonuclease that specifically degrades the RNA of RNA-DNA hybrids.</text>
</comment>
<comment type="catalytic activity">
    <reaction evidence="1">
        <text>Endonucleolytic cleavage to 5'-phosphomonoester.</text>
        <dbReference type="EC" id="3.1.26.4"/>
    </reaction>
</comment>
<comment type="cofactor">
    <cofactor evidence="1">
        <name>Mg(2+)</name>
        <dbReference type="ChEBI" id="CHEBI:18420"/>
    </cofactor>
    <text evidence="1">Binds 1 Mg(2+) ion per subunit. May bind a second metal ion at a regulatory site, or after substrate binding.</text>
</comment>
<comment type="subunit">
    <text evidence="1">Monomer.</text>
</comment>
<comment type="subcellular location">
    <subcellularLocation>
        <location evidence="1">Cytoplasm</location>
    </subcellularLocation>
</comment>
<comment type="similarity">
    <text evidence="1">Belongs to the RNase H family.</text>
</comment>
<proteinExistence type="inferred from homology"/>
<keyword id="KW-0963">Cytoplasm</keyword>
<keyword id="KW-0255">Endonuclease</keyword>
<keyword id="KW-0378">Hydrolase</keyword>
<keyword id="KW-0460">Magnesium</keyword>
<keyword id="KW-0479">Metal-binding</keyword>
<keyword id="KW-0540">Nuclease</keyword>
<keyword id="KW-1185">Reference proteome</keyword>
<organism>
    <name type="scientific">Erwinia tasmaniensis (strain DSM 17950 / CFBP 7177 / CIP 109463 / NCPPB 4357 / Et1/99)</name>
    <dbReference type="NCBI Taxonomy" id="465817"/>
    <lineage>
        <taxon>Bacteria</taxon>
        <taxon>Pseudomonadati</taxon>
        <taxon>Pseudomonadota</taxon>
        <taxon>Gammaproteobacteria</taxon>
        <taxon>Enterobacterales</taxon>
        <taxon>Erwiniaceae</taxon>
        <taxon>Erwinia</taxon>
    </lineage>
</organism>
<name>RNH_ERWT9</name>
<reference key="1">
    <citation type="journal article" date="2008" name="Environ. Microbiol.">
        <title>The genome of Erwinia tasmaniensis strain Et1/99, a non-pathogenic bacterium in the genus Erwinia.</title>
        <authorList>
            <person name="Kube M."/>
            <person name="Migdoll A.M."/>
            <person name="Mueller I."/>
            <person name="Kuhl H."/>
            <person name="Beck A."/>
            <person name="Reinhardt R."/>
            <person name="Geider K."/>
        </authorList>
    </citation>
    <scope>NUCLEOTIDE SEQUENCE [LARGE SCALE GENOMIC DNA]</scope>
    <source>
        <strain>DSM 17950 / CFBP 7177 / CIP 109463 / NCPPB 4357 / Et1/99</strain>
    </source>
</reference>
<feature type="chain" id="PRO_1000090901" description="Ribonuclease H">
    <location>
        <begin position="1"/>
        <end position="155"/>
    </location>
</feature>
<feature type="domain" description="RNase H type-1" evidence="2">
    <location>
        <begin position="1"/>
        <end position="142"/>
    </location>
</feature>
<feature type="binding site" evidence="1">
    <location>
        <position position="10"/>
    </location>
    <ligand>
        <name>Mg(2+)</name>
        <dbReference type="ChEBI" id="CHEBI:18420"/>
        <label>1</label>
    </ligand>
</feature>
<feature type="binding site" evidence="1">
    <location>
        <position position="10"/>
    </location>
    <ligand>
        <name>Mg(2+)</name>
        <dbReference type="ChEBI" id="CHEBI:18420"/>
        <label>2</label>
    </ligand>
</feature>
<feature type="binding site" evidence="1">
    <location>
        <position position="48"/>
    </location>
    <ligand>
        <name>Mg(2+)</name>
        <dbReference type="ChEBI" id="CHEBI:18420"/>
        <label>1</label>
    </ligand>
</feature>
<feature type="binding site" evidence="1">
    <location>
        <position position="70"/>
    </location>
    <ligand>
        <name>Mg(2+)</name>
        <dbReference type="ChEBI" id="CHEBI:18420"/>
        <label>1</label>
    </ligand>
</feature>
<feature type="binding site" evidence="1">
    <location>
        <position position="134"/>
    </location>
    <ligand>
        <name>Mg(2+)</name>
        <dbReference type="ChEBI" id="CHEBI:18420"/>
        <label>2</label>
    </ligand>
</feature>
<protein>
    <recommendedName>
        <fullName evidence="1">Ribonuclease H</fullName>
        <shortName evidence="1">RNase H</shortName>
        <ecNumber evidence="1">3.1.26.4</ecNumber>
    </recommendedName>
</protein>
<evidence type="ECO:0000255" key="1">
    <source>
        <dbReference type="HAMAP-Rule" id="MF_00042"/>
    </source>
</evidence>
<evidence type="ECO:0000255" key="2">
    <source>
        <dbReference type="PROSITE-ProRule" id="PRU00408"/>
    </source>
</evidence>
<accession>B2VHJ5</accession>
<sequence length="155" mass="17329">MLKQVEIFTDGSCLGNPGPGGYGAIMRYGKHEKIFSAGFRLTTNNRMEMMAAIVALEALTQPCAVVLSTDSQYVRQGITSWIHNWKKRGWKTTDKKPVKNVDLWKRLDAALSHHDITWKWVKGHAGHVENERCDELARNAAGNPTLDDVGYTSEA</sequence>